<accession>Q09698</accession>
<gene>
    <name type="ORF">SPAC2F7.07c</name>
</gene>
<organism>
    <name type="scientific">Schizosaccharomyces pombe (strain 972 / ATCC 24843)</name>
    <name type="common">Fission yeast</name>
    <dbReference type="NCBI Taxonomy" id="284812"/>
    <lineage>
        <taxon>Eukaryota</taxon>
        <taxon>Fungi</taxon>
        <taxon>Dikarya</taxon>
        <taxon>Ascomycota</taxon>
        <taxon>Taphrinomycotina</taxon>
        <taxon>Schizosaccharomycetes</taxon>
        <taxon>Schizosaccharomycetales</taxon>
        <taxon>Schizosaccharomycetaceae</taxon>
        <taxon>Schizosaccharomyces</taxon>
    </lineage>
</organism>
<proteinExistence type="evidence at protein level"/>
<name>YA27_SCHPO</name>
<sequence length="607" mass="68777">MDAKPWNHTSEAFQASILEDLKIIQKAGAERNAKSSHGSINSRSASPNKATSRRNRAQNGNSNGRASVDNSDDGSKDDLDYSPSVKRKHVNGEGAEKGDHDTSNNGPSITKLRRKVRRTYDTKDGFVAWNTLDDDFRPIVPDQERSRKINPQKGNNNNLLKENKSLKTTAKDLSDISSSSMKKANNSSKPLFSGKLTFKANIPVPTSEVVTENNVTRNVTVYSNQKHLGNESENFNDMEGRAEDISSNELLPTPEEYPYRYNNDYCSACHGPGNFLCCETCPNSFHFTCIDPPIEEKNLPDDAWYCNECKHHSLYNELDEQEELESNVKEEGTMVDVWMQLCTYIDSHNPIQFHLPHSISSFFRGVGSGVMGEYIETDVLKHLKSSRRSNGEERDPLLLKSKSGTPILCFRCHKSALVSQSILACDYCNSYWHPDCLNPPLATLPSNLRKWKCPNHSDHVTPRYRLPEKAKVIRVGLPRGFKNKGNIVIDENEDEPSVQTIQLQGKIRVVPSKPFKLNFLEQIRDNVINLRKMVEQDEQLCIETFSKFDFYATRDCELPLRILCDVANDNLENDDYVLALRDLLRISKWDPNQPVPAPFDLANLLSY</sequence>
<feature type="chain" id="PRO_0000116383" description="Uncharacterized protein C2F7.07c">
    <location>
        <begin position="1"/>
        <end position="607"/>
    </location>
</feature>
<feature type="zinc finger region" description="PHD-type 1" evidence="1">
    <location>
        <begin position="263"/>
        <end position="312"/>
    </location>
</feature>
<feature type="zinc finger region" description="PHD-type 2" evidence="1">
    <location>
        <begin position="406"/>
        <end position="459"/>
    </location>
</feature>
<feature type="region of interest" description="Disordered" evidence="2">
    <location>
        <begin position="28"/>
        <end position="114"/>
    </location>
</feature>
<feature type="region of interest" description="Disordered" evidence="2">
    <location>
        <begin position="142"/>
        <end position="188"/>
    </location>
</feature>
<feature type="compositionally biased region" description="Polar residues" evidence="2">
    <location>
        <begin position="35"/>
        <end position="50"/>
    </location>
</feature>
<feature type="compositionally biased region" description="Basic and acidic residues" evidence="2">
    <location>
        <begin position="90"/>
        <end position="102"/>
    </location>
</feature>
<feature type="compositionally biased region" description="Basic and acidic residues" evidence="2">
    <location>
        <begin position="161"/>
        <end position="174"/>
    </location>
</feature>
<feature type="compositionally biased region" description="Low complexity" evidence="2">
    <location>
        <begin position="177"/>
        <end position="188"/>
    </location>
</feature>
<feature type="turn" evidence="3">
    <location>
        <begin position="267"/>
        <end position="269"/>
    </location>
</feature>
<feature type="strand" evidence="3">
    <location>
        <begin position="279"/>
        <end position="281"/>
    </location>
</feature>
<feature type="strand" evidence="3">
    <location>
        <begin position="287"/>
        <end position="292"/>
    </location>
</feature>
<feature type="helix" evidence="3">
    <location>
        <begin position="335"/>
        <end position="344"/>
    </location>
</feature>
<feature type="helix" evidence="3">
    <location>
        <begin position="357"/>
        <end position="360"/>
    </location>
</feature>
<feature type="strand" evidence="3">
    <location>
        <begin position="361"/>
        <end position="365"/>
    </location>
</feature>
<feature type="strand" evidence="3">
    <location>
        <begin position="370"/>
        <end position="372"/>
    </location>
</feature>
<feature type="strand" evidence="3">
    <location>
        <begin position="409"/>
        <end position="412"/>
    </location>
</feature>
<feature type="strand" evidence="3">
    <location>
        <begin position="418"/>
        <end position="420"/>
    </location>
</feature>
<feature type="strand" evidence="3">
    <location>
        <begin position="426"/>
        <end position="429"/>
    </location>
</feature>
<feature type="turn" evidence="3">
    <location>
        <begin position="434"/>
        <end position="436"/>
    </location>
</feature>
<feature type="strand" evidence="3">
    <location>
        <begin position="437"/>
        <end position="439"/>
    </location>
</feature>
<feature type="turn" evidence="3">
    <location>
        <begin position="458"/>
        <end position="460"/>
    </location>
</feature>
<feature type="strand" evidence="3">
    <location>
        <begin position="472"/>
        <end position="474"/>
    </location>
</feature>
<feature type="strand" evidence="3">
    <location>
        <begin position="487"/>
        <end position="489"/>
    </location>
</feature>
<feature type="helix" evidence="3">
    <location>
        <begin position="519"/>
        <end position="544"/>
    </location>
</feature>
<feature type="helix" evidence="3">
    <location>
        <begin position="548"/>
        <end position="567"/>
    </location>
</feature>
<feature type="helix" evidence="3">
    <location>
        <begin position="576"/>
        <end position="586"/>
    </location>
</feature>
<feature type="turn" evidence="3">
    <location>
        <begin position="598"/>
        <end position="600"/>
    </location>
</feature>
<feature type="helix" evidence="3">
    <location>
        <begin position="601"/>
        <end position="604"/>
    </location>
</feature>
<evidence type="ECO:0000255" key="1">
    <source>
        <dbReference type="PROSITE-ProRule" id="PRU00146"/>
    </source>
</evidence>
<evidence type="ECO:0000256" key="2">
    <source>
        <dbReference type="SAM" id="MobiDB-lite"/>
    </source>
</evidence>
<evidence type="ECO:0007829" key="3">
    <source>
        <dbReference type="PDB" id="8I02"/>
    </source>
</evidence>
<dbReference type="EMBL" id="CU329670">
    <property type="protein sequence ID" value="CAA90494.1"/>
    <property type="molecule type" value="Genomic_DNA"/>
</dbReference>
<dbReference type="PIR" id="T38555">
    <property type="entry name" value="S58151"/>
</dbReference>
<dbReference type="PDB" id="8I02">
    <property type="method" value="EM"/>
    <property type="resolution" value="2.90 A"/>
    <property type="chains" value="G=1-607"/>
</dbReference>
<dbReference type="PDB" id="8IFG">
    <property type="method" value="EM"/>
    <property type="resolution" value="3.20 A"/>
    <property type="chains" value="P=1-607"/>
</dbReference>
<dbReference type="PDBsum" id="8I02"/>
<dbReference type="PDBsum" id="8IFG"/>
<dbReference type="EMDB" id="EMD-35092"/>
<dbReference type="EMDB" id="EMD-35416"/>
<dbReference type="SMR" id="Q09698"/>
<dbReference type="BioGRID" id="277928">
    <property type="interactions" value="352"/>
</dbReference>
<dbReference type="ComplexPortal" id="CPX-9124">
    <property type="entry name" value="RPD3S histone deacetylase complex"/>
</dbReference>
<dbReference type="DIP" id="DIP-29347N"/>
<dbReference type="FunCoup" id="Q09698">
    <property type="interactions" value="46"/>
</dbReference>
<dbReference type="IntAct" id="Q09698">
    <property type="interactions" value="4"/>
</dbReference>
<dbReference type="STRING" id="284812.Q09698"/>
<dbReference type="iPTMnet" id="Q09698"/>
<dbReference type="PaxDb" id="4896-SPAC2F7.07c.1"/>
<dbReference type="EnsemblFungi" id="SPAC2F7.07c.1">
    <property type="protein sequence ID" value="SPAC2F7.07c.1:pep"/>
    <property type="gene ID" value="SPAC2F7.07c"/>
</dbReference>
<dbReference type="KEGG" id="spo:2541422"/>
<dbReference type="PomBase" id="SPAC2F7.07c"/>
<dbReference type="VEuPathDB" id="FungiDB:SPAC2F7.07c"/>
<dbReference type="eggNOG" id="KOG4299">
    <property type="taxonomic scope" value="Eukaryota"/>
</dbReference>
<dbReference type="HOGENOM" id="CLU_460902_0_0_1"/>
<dbReference type="InParanoid" id="Q09698"/>
<dbReference type="OMA" id="NFLCCET"/>
<dbReference type="PRO" id="PR:Q09698"/>
<dbReference type="Proteomes" id="UP000002485">
    <property type="component" value="Chromosome I"/>
</dbReference>
<dbReference type="GO" id="GO:0072686">
    <property type="term" value="C:mitotic spindle"/>
    <property type="evidence" value="ECO:0007005"/>
    <property type="project" value="PomBase"/>
</dbReference>
<dbReference type="GO" id="GO:0005634">
    <property type="term" value="C:nucleus"/>
    <property type="evidence" value="ECO:0007005"/>
    <property type="project" value="PomBase"/>
</dbReference>
<dbReference type="GO" id="GO:0032221">
    <property type="term" value="C:Rpd3S complex"/>
    <property type="evidence" value="ECO:0000314"/>
    <property type="project" value="PomBase"/>
</dbReference>
<dbReference type="GO" id="GO:0060090">
    <property type="term" value="F:molecular adaptor activity"/>
    <property type="evidence" value="ECO:0000269"/>
    <property type="project" value="PomBase"/>
</dbReference>
<dbReference type="GO" id="GO:0008270">
    <property type="term" value="F:zinc ion binding"/>
    <property type="evidence" value="ECO:0007669"/>
    <property type="project" value="UniProtKB-KW"/>
</dbReference>
<dbReference type="GO" id="GO:0006357">
    <property type="term" value="P:regulation of transcription by RNA polymerase II"/>
    <property type="evidence" value="ECO:0000318"/>
    <property type="project" value="GO_Central"/>
</dbReference>
<dbReference type="GO" id="GO:0045815">
    <property type="term" value="P:transcription initiation-coupled chromatin remodeling"/>
    <property type="evidence" value="ECO:0000305"/>
    <property type="project" value="PomBase"/>
</dbReference>
<dbReference type="CDD" id="cd15535">
    <property type="entry name" value="PHD1_Rco1"/>
    <property type="match status" value="1"/>
</dbReference>
<dbReference type="CDD" id="cd15534">
    <property type="entry name" value="PHD2_PHF12_Rco1"/>
    <property type="match status" value="1"/>
</dbReference>
<dbReference type="Gene3D" id="3.30.40.10">
    <property type="entry name" value="Zinc/RING finger domain, C3HC4 (zinc finger)"/>
    <property type="match status" value="2"/>
</dbReference>
<dbReference type="InterPro" id="IPR052819">
    <property type="entry name" value="Chromatin_regulatory_protein"/>
</dbReference>
<dbReference type="InterPro" id="IPR019786">
    <property type="entry name" value="Zinc_finger_PHD-type_CS"/>
</dbReference>
<dbReference type="InterPro" id="IPR011011">
    <property type="entry name" value="Znf_FYVE_PHD"/>
</dbReference>
<dbReference type="InterPro" id="IPR001965">
    <property type="entry name" value="Znf_PHD"/>
</dbReference>
<dbReference type="InterPro" id="IPR019787">
    <property type="entry name" value="Znf_PHD-finger"/>
</dbReference>
<dbReference type="InterPro" id="IPR013083">
    <property type="entry name" value="Znf_RING/FYVE/PHD"/>
</dbReference>
<dbReference type="PANTHER" id="PTHR47636">
    <property type="entry name" value="TRANSCRIPTIONAL REGULATORY PROTEIN RCO1"/>
    <property type="match status" value="1"/>
</dbReference>
<dbReference type="PANTHER" id="PTHR47636:SF1">
    <property type="entry name" value="TRANSCRIPTIONAL REGULATORY PROTEIN RCO1"/>
    <property type="match status" value="1"/>
</dbReference>
<dbReference type="Pfam" id="PF00628">
    <property type="entry name" value="PHD"/>
    <property type="match status" value="2"/>
</dbReference>
<dbReference type="SMART" id="SM00249">
    <property type="entry name" value="PHD"/>
    <property type="match status" value="2"/>
</dbReference>
<dbReference type="SUPFAM" id="SSF57903">
    <property type="entry name" value="FYVE/PHD zinc finger"/>
    <property type="match status" value="2"/>
</dbReference>
<dbReference type="PROSITE" id="PS01359">
    <property type="entry name" value="ZF_PHD_1"/>
    <property type="match status" value="1"/>
</dbReference>
<dbReference type="PROSITE" id="PS50016">
    <property type="entry name" value="ZF_PHD_2"/>
    <property type="match status" value="2"/>
</dbReference>
<reference key="1">
    <citation type="journal article" date="2002" name="Nature">
        <title>The genome sequence of Schizosaccharomyces pombe.</title>
        <authorList>
            <person name="Wood V."/>
            <person name="Gwilliam R."/>
            <person name="Rajandream M.A."/>
            <person name="Lyne M.H."/>
            <person name="Lyne R."/>
            <person name="Stewart A."/>
            <person name="Sgouros J.G."/>
            <person name="Peat N."/>
            <person name="Hayles J."/>
            <person name="Baker S.G."/>
            <person name="Basham D."/>
            <person name="Bowman S."/>
            <person name="Brooks K."/>
            <person name="Brown D."/>
            <person name="Brown S."/>
            <person name="Chillingworth T."/>
            <person name="Churcher C.M."/>
            <person name="Collins M."/>
            <person name="Connor R."/>
            <person name="Cronin A."/>
            <person name="Davis P."/>
            <person name="Feltwell T."/>
            <person name="Fraser A."/>
            <person name="Gentles S."/>
            <person name="Goble A."/>
            <person name="Hamlin N."/>
            <person name="Harris D.E."/>
            <person name="Hidalgo J."/>
            <person name="Hodgson G."/>
            <person name="Holroyd S."/>
            <person name="Hornsby T."/>
            <person name="Howarth S."/>
            <person name="Huckle E.J."/>
            <person name="Hunt S."/>
            <person name="Jagels K."/>
            <person name="James K.D."/>
            <person name="Jones L."/>
            <person name="Jones M."/>
            <person name="Leather S."/>
            <person name="McDonald S."/>
            <person name="McLean J."/>
            <person name="Mooney P."/>
            <person name="Moule S."/>
            <person name="Mungall K.L."/>
            <person name="Murphy L.D."/>
            <person name="Niblett D."/>
            <person name="Odell C."/>
            <person name="Oliver K."/>
            <person name="O'Neil S."/>
            <person name="Pearson D."/>
            <person name="Quail M.A."/>
            <person name="Rabbinowitsch E."/>
            <person name="Rutherford K.M."/>
            <person name="Rutter S."/>
            <person name="Saunders D."/>
            <person name="Seeger K."/>
            <person name="Sharp S."/>
            <person name="Skelton J."/>
            <person name="Simmonds M.N."/>
            <person name="Squares R."/>
            <person name="Squares S."/>
            <person name="Stevens K."/>
            <person name="Taylor K."/>
            <person name="Taylor R.G."/>
            <person name="Tivey A."/>
            <person name="Walsh S.V."/>
            <person name="Warren T."/>
            <person name="Whitehead S."/>
            <person name="Woodward J.R."/>
            <person name="Volckaert G."/>
            <person name="Aert R."/>
            <person name="Robben J."/>
            <person name="Grymonprez B."/>
            <person name="Weltjens I."/>
            <person name="Vanstreels E."/>
            <person name="Rieger M."/>
            <person name="Schaefer M."/>
            <person name="Mueller-Auer S."/>
            <person name="Gabel C."/>
            <person name="Fuchs M."/>
            <person name="Duesterhoeft A."/>
            <person name="Fritzc C."/>
            <person name="Holzer E."/>
            <person name="Moestl D."/>
            <person name="Hilbert H."/>
            <person name="Borzym K."/>
            <person name="Langer I."/>
            <person name="Beck A."/>
            <person name="Lehrach H."/>
            <person name="Reinhardt R."/>
            <person name="Pohl T.M."/>
            <person name="Eger P."/>
            <person name="Zimmermann W."/>
            <person name="Wedler H."/>
            <person name="Wambutt R."/>
            <person name="Purnelle B."/>
            <person name="Goffeau A."/>
            <person name="Cadieu E."/>
            <person name="Dreano S."/>
            <person name="Gloux S."/>
            <person name="Lelaure V."/>
            <person name="Mottier S."/>
            <person name="Galibert F."/>
            <person name="Aves S.J."/>
            <person name="Xiang Z."/>
            <person name="Hunt C."/>
            <person name="Moore K."/>
            <person name="Hurst S.M."/>
            <person name="Lucas M."/>
            <person name="Rochet M."/>
            <person name="Gaillardin C."/>
            <person name="Tallada V.A."/>
            <person name="Garzon A."/>
            <person name="Thode G."/>
            <person name="Daga R.R."/>
            <person name="Cruzado L."/>
            <person name="Jimenez J."/>
            <person name="Sanchez M."/>
            <person name="del Rey F."/>
            <person name="Benito J."/>
            <person name="Dominguez A."/>
            <person name="Revuelta J.L."/>
            <person name="Moreno S."/>
            <person name="Armstrong J."/>
            <person name="Forsburg S.L."/>
            <person name="Cerutti L."/>
            <person name="Lowe T."/>
            <person name="McCombie W.R."/>
            <person name="Paulsen I."/>
            <person name="Potashkin J."/>
            <person name="Shpakovski G.V."/>
            <person name="Ussery D."/>
            <person name="Barrell B.G."/>
            <person name="Nurse P."/>
        </authorList>
    </citation>
    <scope>NUCLEOTIDE SEQUENCE [LARGE SCALE GENOMIC DNA]</scope>
    <source>
        <strain>972 / ATCC 24843</strain>
    </source>
</reference>
<protein>
    <recommendedName>
        <fullName>Uncharacterized protein C2F7.07c</fullName>
    </recommendedName>
</protein>
<keyword id="KW-0002">3D-structure</keyword>
<keyword id="KW-0479">Metal-binding</keyword>
<keyword id="KW-1185">Reference proteome</keyword>
<keyword id="KW-0677">Repeat</keyword>
<keyword id="KW-0862">Zinc</keyword>
<keyword id="KW-0863">Zinc-finger</keyword>